<accession>A9M2N2</accession>
<evidence type="ECO:0000255" key="1">
    <source>
        <dbReference type="HAMAP-Rule" id="MF_00222"/>
    </source>
</evidence>
<sequence length="269" mass="28499">MTALPRYSVFGNPVAHSKSPQIHQQFALQEGVDIEYERICADIGGFAQAVSTFFGTGGCGANVTVPFKQEAFHLADEHSDRALAAGAVNTLILLKNGKLRGDNTDGIGLANDITQVKNIAIEGKTILLLGAGGAVRGVIPVLKEHRPARIVIANRTRAKAEELAQLFGIEAVPMADVNGGFDIIINGTSGGLNGQIPDIPPDIFQNCALAYDMVYGCAAKPFLDFARQSGAKKTADGLGMLVGQAAASYALWRGFTPDIRPVIEYMKAM</sequence>
<organism>
    <name type="scientific">Neisseria meningitidis serogroup C (strain 053442)</name>
    <dbReference type="NCBI Taxonomy" id="374833"/>
    <lineage>
        <taxon>Bacteria</taxon>
        <taxon>Pseudomonadati</taxon>
        <taxon>Pseudomonadota</taxon>
        <taxon>Betaproteobacteria</taxon>
        <taxon>Neisseriales</taxon>
        <taxon>Neisseriaceae</taxon>
        <taxon>Neisseria</taxon>
    </lineage>
</organism>
<protein>
    <recommendedName>
        <fullName evidence="1">Shikimate dehydrogenase (NADP(+))</fullName>
        <shortName evidence="1">SDH</shortName>
        <ecNumber evidence="1">1.1.1.25</ecNumber>
    </recommendedName>
</protein>
<dbReference type="EC" id="1.1.1.25" evidence="1"/>
<dbReference type="EMBL" id="CP000381">
    <property type="protein sequence ID" value="ABX73924.1"/>
    <property type="molecule type" value="Genomic_DNA"/>
</dbReference>
<dbReference type="RefSeq" id="WP_012222020.1">
    <property type="nucleotide sequence ID" value="NC_010120.1"/>
</dbReference>
<dbReference type="SMR" id="A9M2N2"/>
<dbReference type="KEGG" id="nmn:NMCC_1783"/>
<dbReference type="HOGENOM" id="CLU_044063_2_1_4"/>
<dbReference type="UniPathway" id="UPA00053">
    <property type="reaction ID" value="UER00087"/>
</dbReference>
<dbReference type="Proteomes" id="UP000001177">
    <property type="component" value="Chromosome"/>
</dbReference>
<dbReference type="GO" id="GO:0005829">
    <property type="term" value="C:cytosol"/>
    <property type="evidence" value="ECO:0007669"/>
    <property type="project" value="TreeGrafter"/>
</dbReference>
<dbReference type="GO" id="GO:0050661">
    <property type="term" value="F:NADP binding"/>
    <property type="evidence" value="ECO:0007669"/>
    <property type="project" value="InterPro"/>
</dbReference>
<dbReference type="GO" id="GO:0004764">
    <property type="term" value="F:shikimate 3-dehydrogenase (NADP+) activity"/>
    <property type="evidence" value="ECO:0007669"/>
    <property type="project" value="UniProtKB-UniRule"/>
</dbReference>
<dbReference type="GO" id="GO:0008652">
    <property type="term" value="P:amino acid biosynthetic process"/>
    <property type="evidence" value="ECO:0007669"/>
    <property type="project" value="UniProtKB-KW"/>
</dbReference>
<dbReference type="GO" id="GO:0009073">
    <property type="term" value="P:aromatic amino acid family biosynthetic process"/>
    <property type="evidence" value="ECO:0007669"/>
    <property type="project" value="UniProtKB-KW"/>
</dbReference>
<dbReference type="GO" id="GO:0009423">
    <property type="term" value="P:chorismate biosynthetic process"/>
    <property type="evidence" value="ECO:0007669"/>
    <property type="project" value="UniProtKB-UniRule"/>
</dbReference>
<dbReference type="GO" id="GO:0019632">
    <property type="term" value="P:shikimate metabolic process"/>
    <property type="evidence" value="ECO:0007669"/>
    <property type="project" value="InterPro"/>
</dbReference>
<dbReference type="CDD" id="cd01065">
    <property type="entry name" value="NAD_bind_Shikimate_DH"/>
    <property type="match status" value="1"/>
</dbReference>
<dbReference type="FunFam" id="3.40.50.10860:FF:000006">
    <property type="entry name" value="Shikimate dehydrogenase (NADP(+))"/>
    <property type="match status" value="1"/>
</dbReference>
<dbReference type="FunFam" id="3.40.50.720:FF:000697">
    <property type="entry name" value="Shikimate dehydrogenase (NADP(+))"/>
    <property type="match status" value="1"/>
</dbReference>
<dbReference type="Gene3D" id="3.40.50.10860">
    <property type="entry name" value="Leucine Dehydrogenase, chain A, domain 1"/>
    <property type="match status" value="1"/>
</dbReference>
<dbReference type="Gene3D" id="3.40.50.720">
    <property type="entry name" value="NAD(P)-binding Rossmann-like Domain"/>
    <property type="match status" value="1"/>
</dbReference>
<dbReference type="HAMAP" id="MF_00222">
    <property type="entry name" value="Shikimate_DH_AroE"/>
    <property type="match status" value="1"/>
</dbReference>
<dbReference type="InterPro" id="IPR046346">
    <property type="entry name" value="Aminoacid_DH-like_N_sf"/>
</dbReference>
<dbReference type="InterPro" id="IPR036291">
    <property type="entry name" value="NAD(P)-bd_dom_sf"/>
</dbReference>
<dbReference type="InterPro" id="IPR041121">
    <property type="entry name" value="SDH_C"/>
</dbReference>
<dbReference type="InterPro" id="IPR011342">
    <property type="entry name" value="Shikimate_DH"/>
</dbReference>
<dbReference type="InterPro" id="IPR013708">
    <property type="entry name" value="Shikimate_DH-bd_N"/>
</dbReference>
<dbReference type="InterPro" id="IPR022893">
    <property type="entry name" value="Shikimate_DH_fam"/>
</dbReference>
<dbReference type="InterPro" id="IPR006151">
    <property type="entry name" value="Shikm_DH/Glu-tRNA_Rdtase"/>
</dbReference>
<dbReference type="NCBIfam" id="TIGR00507">
    <property type="entry name" value="aroE"/>
    <property type="match status" value="1"/>
</dbReference>
<dbReference type="NCBIfam" id="NF001310">
    <property type="entry name" value="PRK00258.1-2"/>
    <property type="match status" value="1"/>
</dbReference>
<dbReference type="PANTHER" id="PTHR21089:SF1">
    <property type="entry name" value="BIFUNCTIONAL 3-DEHYDROQUINATE DEHYDRATASE_SHIKIMATE DEHYDROGENASE, CHLOROPLASTIC"/>
    <property type="match status" value="1"/>
</dbReference>
<dbReference type="PANTHER" id="PTHR21089">
    <property type="entry name" value="SHIKIMATE DEHYDROGENASE"/>
    <property type="match status" value="1"/>
</dbReference>
<dbReference type="Pfam" id="PF18317">
    <property type="entry name" value="SDH_C"/>
    <property type="match status" value="1"/>
</dbReference>
<dbReference type="Pfam" id="PF01488">
    <property type="entry name" value="Shikimate_DH"/>
    <property type="match status" value="1"/>
</dbReference>
<dbReference type="Pfam" id="PF08501">
    <property type="entry name" value="Shikimate_dh_N"/>
    <property type="match status" value="1"/>
</dbReference>
<dbReference type="SUPFAM" id="SSF53223">
    <property type="entry name" value="Aminoacid dehydrogenase-like, N-terminal domain"/>
    <property type="match status" value="1"/>
</dbReference>
<dbReference type="SUPFAM" id="SSF51735">
    <property type="entry name" value="NAD(P)-binding Rossmann-fold domains"/>
    <property type="match status" value="1"/>
</dbReference>
<name>AROE_NEIM0</name>
<keyword id="KW-0028">Amino-acid biosynthesis</keyword>
<keyword id="KW-0057">Aromatic amino acid biosynthesis</keyword>
<keyword id="KW-0521">NADP</keyword>
<keyword id="KW-0560">Oxidoreductase</keyword>
<comment type="function">
    <text evidence="1">Involved in the biosynthesis of the chorismate, which leads to the biosynthesis of aromatic amino acids. Catalyzes the reversible NADPH linked reduction of 3-dehydroshikimate (DHSA) to yield shikimate (SA).</text>
</comment>
<comment type="catalytic activity">
    <reaction evidence="1">
        <text>shikimate + NADP(+) = 3-dehydroshikimate + NADPH + H(+)</text>
        <dbReference type="Rhea" id="RHEA:17737"/>
        <dbReference type="ChEBI" id="CHEBI:15378"/>
        <dbReference type="ChEBI" id="CHEBI:16630"/>
        <dbReference type="ChEBI" id="CHEBI:36208"/>
        <dbReference type="ChEBI" id="CHEBI:57783"/>
        <dbReference type="ChEBI" id="CHEBI:58349"/>
        <dbReference type="EC" id="1.1.1.25"/>
    </reaction>
</comment>
<comment type="pathway">
    <text evidence="1">Metabolic intermediate biosynthesis; chorismate biosynthesis; chorismate from D-erythrose 4-phosphate and phosphoenolpyruvate: step 4/7.</text>
</comment>
<comment type="subunit">
    <text evidence="1">Homodimer.</text>
</comment>
<comment type="similarity">
    <text evidence="1">Belongs to the shikimate dehydrogenase family.</text>
</comment>
<proteinExistence type="inferred from homology"/>
<gene>
    <name evidence="1" type="primary">aroE</name>
    <name type="ordered locus">NMCC_1783</name>
</gene>
<feature type="chain" id="PRO_1000078124" description="Shikimate dehydrogenase (NADP(+))">
    <location>
        <begin position="1"/>
        <end position="269"/>
    </location>
</feature>
<feature type="active site" description="Proton acceptor" evidence="1">
    <location>
        <position position="68"/>
    </location>
</feature>
<feature type="binding site" evidence="1">
    <location>
        <begin position="17"/>
        <end position="19"/>
    </location>
    <ligand>
        <name>shikimate</name>
        <dbReference type="ChEBI" id="CHEBI:36208"/>
    </ligand>
</feature>
<feature type="binding site" evidence="1">
    <location>
        <position position="64"/>
    </location>
    <ligand>
        <name>shikimate</name>
        <dbReference type="ChEBI" id="CHEBI:36208"/>
    </ligand>
</feature>
<feature type="binding site" evidence="1">
    <location>
        <position position="80"/>
    </location>
    <ligand>
        <name>NADP(+)</name>
        <dbReference type="ChEBI" id="CHEBI:58349"/>
    </ligand>
</feature>
<feature type="binding site" evidence="1">
    <location>
        <position position="89"/>
    </location>
    <ligand>
        <name>shikimate</name>
        <dbReference type="ChEBI" id="CHEBI:36208"/>
    </ligand>
</feature>
<feature type="binding site" evidence="1">
    <location>
        <position position="105"/>
    </location>
    <ligand>
        <name>shikimate</name>
        <dbReference type="ChEBI" id="CHEBI:36208"/>
    </ligand>
</feature>
<feature type="binding site" evidence="1">
    <location>
        <begin position="130"/>
        <end position="134"/>
    </location>
    <ligand>
        <name>NADP(+)</name>
        <dbReference type="ChEBI" id="CHEBI:58349"/>
    </ligand>
</feature>
<feature type="binding site" evidence="1">
    <location>
        <begin position="154"/>
        <end position="159"/>
    </location>
    <ligand>
        <name>NADP(+)</name>
        <dbReference type="ChEBI" id="CHEBI:58349"/>
    </ligand>
</feature>
<feature type="binding site" evidence="1">
    <location>
        <position position="213"/>
    </location>
    <ligand>
        <name>NADP(+)</name>
        <dbReference type="ChEBI" id="CHEBI:58349"/>
    </ligand>
</feature>
<feature type="binding site" evidence="1">
    <location>
        <position position="215"/>
    </location>
    <ligand>
        <name>shikimate</name>
        <dbReference type="ChEBI" id="CHEBI:36208"/>
    </ligand>
</feature>
<feature type="binding site" evidence="1">
    <location>
        <position position="237"/>
    </location>
    <ligand>
        <name>NADP(+)</name>
        <dbReference type="ChEBI" id="CHEBI:58349"/>
    </ligand>
</feature>
<reference key="1">
    <citation type="journal article" date="2008" name="Genomics">
        <title>Characterization of ST-4821 complex, a unique Neisseria meningitidis clone.</title>
        <authorList>
            <person name="Peng J."/>
            <person name="Yang L."/>
            <person name="Yang F."/>
            <person name="Yang J."/>
            <person name="Yan Y."/>
            <person name="Nie H."/>
            <person name="Zhang X."/>
            <person name="Xiong Z."/>
            <person name="Jiang Y."/>
            <person name="Cheng F."/>
            <person name="Xu X."/>
            <person name="Chen S."/>
            <person name="Sun L."/>
            <person name="Li W."/>
            <person name="Shen Y."/>
            <person name="Shao Z."/>
            <person name="Liang X."/>
            <person name="Xu J."/>
            <person name="Jin Q."/>
        </authorList>
    </citation>
    <scope>NUCLEOTIDE SEQUENCE [LARGE SCALE GENOMIC DNA]</scope>
    <source>
        <strain>053442</strain>
    </source>
</reference>